<dbReference type="EMBL" id="AC012679">
    <property type="status" value="NOT_ANNOTATED_CDS"/>
    <property type="molecule type" value="Genomic_DNA"/>
</dbReference>
<dbReference type="EMBL" id="AC079676">
    <property type="status" value="NOT_ANNOTATED_CDS"/>
    <property type="molecule type" value="Genomic_DNA"/>
</dbReference>
<dbReference type="EMBL" id="CP002684">
    <property type="protein sequence ID" value="AEE35483.1"/>
    <property type="molecule type" value="Genomic_DNA"/>
</dbReference>
<dbReference type="EMBL" id="DQ912259">
    <property type="protein sequence ID" value="ABK27959.1"/>
    <property type="status" value="ALT_SEQ"/>
    <property type="molecule type" value="mRNA"/>
</dbReference>
<dbReference type="EMBL" id="EF182800">
    <property type="status" value="NOT_ANNOTATED_CDS"/>
    <property type="molecule type" value="mRNA"/>
</dbReference>
<dbReference type="RefSeq" id="NP_001031275.1">
    <property type="nucleotide sequence ID" value="NM_001036198.3"/>
</dbReference>
<dbReference type="STRING" id="3702.P82778"/>
<dbReference type="PaxDb" id="3702-AT1G73603.1"/>
<dbReference type="EnsemblPlants" id="AT1G73603.1">
    <property type="protein sequence ID" value="AT1G73603.1"/>
    <property type="gene ID" value="AT1G73603"/>
</dbReference>
<dbReference type="GeneID" id="3767692"/>
<dbReference type="Gramene" id="AT1G73603.1">
    <property type="protein sequence ID" value="AT1G73603.1"/>
    <property type="gene ID" value="AT1G73603"/>
</dbReference>
<dbReference type="KEGG" id="ath:AT1G73603"/>
<dbReference type="Araport" id="AT1G73603"/>
<dbReference type="TAIR" id="AT1G73603">
    <property type="gene designation" value="LCR64"/>
</dbReference>
<dbReference type="HOGENOM" id="CLU_196273_0_0_1"/>
<dbReference type="InParanoid" id="P82778"/>
<dbReference type="OMA" id="NMGCNDY"/>
<dbReference type="OrthoDB" id="1021220at2759"/>
<dbReference type="PhylomeDB" id="P82778"/>
<dbReference type="PRO" id="PR:P82778"/>
<dbReference type="Proteomes" id="UP000006548">
    <property type="component" value="Chromosome 1"/>
</dbReference>
<dbReference type="ExpressionAtlas" id="P82778">
    <property type="expression patterns" value="baseline and differential"/>
</dbReference>
<dbReference type="GO" id="GO:0005576">
    <property type="term" value="C:extracellular region"/>
    <property type="evidence" value="ECO:0007669"/>
    <property type="project" value="UniProtKB-SubCell"/>
</dbReference>
<dbReference type="GO" id="GO:0050832">
    <property type="term" value="P:defense response to fungus"/>
    <property type="evidence" value="ECO:0007669"/>
    <property type="project" value="UniProtKB-KW"/>
</dbReference>
<dbReference type="GO" id="GO:0031640">
    <property type="term" value="P:killing of cells of another organism"/>
    <property type="evidence" value="ECO:0007669"/>
    <property type="project" value="UniProtKB-KW"/>
</dbReference>
<accession>P82778</accession>
<accession>A0MJW0</accession>
<name>DF178_ARATH</name>
<protein>
    <recommendedName>
        <fullName>Defensin-like protein 178</fullName>
    </recommendedName>
    <alternativeName>
        <fullName>Low-molecular-weight cysteine-rich protein 64</fullName>
        <shortName>Protein LCR64</shortName>
    </alternativeName>
</protein>
<sequence length="90" mass="10292">MAKATSSLVVPIIFLVIFALVEQNMGCNDYIVGDVCVHCRERCLRYYPVTRKAECYRNHCLCIGPCPDDRPHKRFQMLNSSKNVKAQILS</sequence>
<organism evidence="4">
    <name type="scientific">Arabidopsis thaliana</name>
    <name type="common">Mouse-ear cress</name>
    <dbReference type="NCBI Taxonomy" id="3702"/>
    <lineage>
        <taxon>Eukaryota</taxon>
        <taxon>Viridiplantae</taxon>
        <taxon>Streptophyta</taxon>
        <taxon>Embryophyta</taxon>
        <taxon>Tracheophyta</taxon>
        <taxon>Spermatophyta</taxon>
        <taxon>Magnoliopsida</taxon>
        <taxon>eudicotyledons</taxon>
        <taxon>Gunneridae</taxon>
        <taxon>Pentapetalae</taxon>
        <taxon>rosids</taxon>
        <taxon>malvids</taxon>
        <taxon>Brassicales</taxon>
        <taxon>Brassicaceae</taxon>
        <taxon>Camelineae</taxon>
        <taxon>Arabidopsis</taxon>
    </lineage>
</organism>
<comment type="subcellular location">
    <subcellularLocation>
        <location evidence="1">Secreted</location>
    </subcellularLocation>
</comment>
<comment type="similarity">
    <text evidence="4">Belongs to the DEFL family.</text>
</comment>
<comment type="sequence caution" evidence="4">
    <conflict type="erroneous termination">
        <sequence resource="EMBL-CDS" id="ABK27959"/>
    </conflict>
    <text>Extended C-terminus.</text>
</comment>
<keyword id="KW-0929">Antimicrobial</keyword>
<keyword id="KW-1015">Disulfide bond</keyword>
<keyword id="KW-0295">Fungicide</keyword>
<keyword id="KW-0611">Plant defense</keyword>
<keyword id="KW-1185">Reference proteome</keyword>
<keyword id="KW-0964">Secreted</keyword>
<keyword id="KW-0732">Signal</keyword>
<proteinExistence type="inferred from homology"/>
<evidence type="ECO:0000250" key="1"/>
<evidence type="ECO:0000255" key="2"/>
<evidence type="ECO:0000269" key="3">
    <source>
    </source>
</evidence>
<evidence type="ECO:0000305" key="4"/>
<feature type="signal peptide" evidence="2">
    <location>
        <begin position="1"/>
        <end position="23"/>
    </location>
</feature>
<feature type="chain" id="PRO_0000017302" description="Defensin-like protein 178">
    <location>
        <begin position="24"/>
        <end position="90"/>
    </location>
</feature>
<feature type="disulfide bond" evidence="1">
    <location>
        <begin position="27"/>
        <end position="66"/>
    </location>
</feature>
<feature type="disulfide bond" evidence="1">
    <location>
        <begin position="36"/>
        <end position="55"/>
    </location>
</feature>
<feature type="disulfide bond" evidence="1">
    <location>
        <begin position="39"/>
        <end position="60"/>
    </location>
</feature>
<feature type="disulfide bond" evidence="1">
    <location>
        <begin position="43"/>
        <end position="62"/>
    </location>
</feature>
<reference evidence="4" key="1">
    <citation type="journal article" date="2000" name="Nature">
        <title>Sequence and analysis of chromosome 1 of the plant Arabidopsis thaliana.</title>
        <authorList>
            <person name="Theologis A."/>
            <person name="Ecker J.R."/>
            <person name="Palm C.J."/>
            <person name="Federspiel N.A."/>
            <person name="Kaul S."/>
            <person name="White O."/>
            <person name="Alonso J."/>
            <person name="Altafi H."/>
            <person name="Araujo R."/>
            <person name="Bowman C.L."/>
            <person name="Brooks S.Y."/>
            <person name="Buehler E."/>
            <person name="Chan A."/>
            <person name="Chao Q."/>
            <person name="Chen H."/>
            <person name="Cheuk R.F."/>
            <person name="Chin C.W."/>
            <person name="Chung M.K."/>
            <person name="Conn L."/>
            <person name="Conway A.B."/>
            <person name="Conway A.R."/>
            <person name="Creasy T.H."/>
            <person name="Dewar K."/>
            <person name="Dunn P."/>
            <person name="Etgu P."/>
            <person name="Feldblyum T.V."/>
            <person name="Feng J.-D."/>
            <person name="Fong B."/>
            <person name="Fujii C.Y."/>
            <person name="Gill J.E."/>
            <person name="Goldsmith A.D."/>
            <person name="Haas B."/>
            <person name="Hansen N.F."/>
            <person name="Hughes B."/>
            <person name="Huizar L."/>
            <person name="Hunter J.L."/>
            <person name="Jenkins J."/>
            <person name="Johnson-Hopson C."/>
            <person name="Khan S."/>
            <person name="Khaykin E."/>
            <person name="Kim C.J."/>
            <person name="Koo H.L."/>
            <person name="Kremenetskaia I."/>
            <person name="Kurtz D.B."/>
            <person name="Kwan A."/>
            <person name="Lam B."/>
            <person name="Langin-Hooper S."/>
            <person name="Lee A."/>
            <person name="Lee J.M."/>
            <person name="Lenz C.A."/>
            <person name="Li J.H."/>
            <person name="Li Y.-P."/>
            <person name="Lin X."/>
            <person name="Liu S.X."/>
            <person name="Liu Z.A."/>
            <person name="Luros J.S."/>
            <person name="Maiti R."/>
            <person name="Marziali A."/>
            <person name="Militscher J."/>
            <person name="Miranda M."/>
            <person name="Nguyen M."/>
            <person name="Nierman W.C."/>
            <person name="Osborne B.I."/>
            <person name="Pai G."/>
            <person name="Peterson J."/>
            <person name="Pham P.K."/>
            <person name="Rizzo M."/>
            <person name="Rooney T."/>
            <person name="Rowley D."/>
            <person name="Sakano H."/>
            <person name="Salzberg S.L."/>
            <person name="Schwartz J.R."/>
            <person name="Shinn P."/>
            <person name="Southwick A.M."/>
            <person name="Sun H."/>
            <person name="Tallon L.J."/>
            <person name="Tambunga G."/>
            <person name="Toriumi M.J."/>
            <person name="Town C.D."/>
            <person name="Utterback T."/>
            <person name="Van Aken S."/>
            <person name="Vaysberg M."/>
            <person name="Vysotskaia V.S."/>
            <person name="Walker M."/>
            <person name="Wu D."/>
            <person name="Yu G."/>
            <person name="Fraser C.M."/>
            <person name="Venter J.C."/>
            <person name="Davis R.W."/>
        </authorList>
    </citation>
    <scope>NUCLEOTIDE SEQUENCE [LARGE SCALE GENOMIC DNA]</scope>
    <source>
        <strain evidence="3">cv. Columbia</strain>
    </source>
</reference>
<reference key="2">
    <citation type="journal article" date="2017" name="Plant J.">
        <title>Araport11: a complete reannotation of the Arabidopsis thaliana reference genome.</title>
        <authorList>
            <person name="Cheng C.Y."/>
            <person name="Krishnakumar V."/>
            <person name="Chan A.P."/>
            <person name="Thibaud-Nissen F."/>
            <person name="Schobel S."/>
            <person name="Town C.D."/>
        </authorList>
    </citation>
    <scope>GENOME REANNOTATION</scope>
    <source>
        <strain>cv. Columbia</strain>
    </source>
</reference>
<reference key="3">
    <citation type="journal article" date="2006" name="Plant Biotechnol. J.">
        <title>Simultaneous high-throughput recombinational cloning of open reading frames in closed and open configurations.</title>
        <authorList>
            <person name="Underwood B.A."/>
            <person name="Vanderhaeghen R."/>
            <person name="Whitford R."/>
            <person name="Town C.D."/>
            <person name="Hilson P."/>
        </authorList>
    </citation>
    <scope>NUCLEOTIDE SEQUENCE [LARGE SCALE MRNA]</scope>
    <source>
        <strain>cv. Columbia</strain>
    </source>
</reference>
<reference key="4">
    <citation type="journal article" date="2007" name="Plant J.">
        <title>Small cysteine-rich peptides resembling antimicrobial peptides have been under-predicted in plants.</title>
        <authorList>
            <person name="Silverstein K.A.T."/>
            <person name="Moskal W.A. Jr."/>
            <person name="Wu H.C."/>
            <person name="Underwood B.A."/>
            <person name="Graham M.A."/>
            <person name="Town C.D."/>
            <person name="VandenBosch K.A."/>
        </authorList>
    </citation>
    <scope>NUCLEOTIDE SEQUENCE [LARGE SCALE MRNA]</scope>
    <source>
        <strain>cv. Columbia</strain>
    </source>
</reference>
<reference evidence="4" key="5">
    <citation type="journal article" date="2001" name="Plant Mol. Biol.">
        <title>Two large Arabidopsis thaliana gene families are homologous to the Brassica gene superfamily that encodes pollen coat proteins and the male component of the self-incompatibility response.</title>
        <authorList>
            <person name="Vanoosthuyse V."/>
            <person name="Miege C."/>
            <person name="Dumas C."/>
            <person name="Cock J.M."/>
        </authorList>
    </citation>
    <scope>IDENTIFICATION</scope>
</reference>
<reference key="6">
    <citation type="journal article" date="2005" name="Plant Physiol.">
        <title>Genome organization of more than 300 defensin-like genes in Arabidopsis.</title>
        <authorList>
            <person name="Silverstein K.A.T."/>
            <person name="Graham M.A."/>
            <person name="Paape T.D."/>
            <person name="VandenBosch K.A."/>
        </authorList>
    </citation>
    <scope>GENE FAMILY</scope>
</reference>
<gene>
    <name type="primary">LCR64</name>
    <name type="ordered locus">At1g73603</name>
    <name type="ORF">F25P22</name>
    <name type="ORF">F6D5</name>
</gene>